<organism>
    <name type="scientific">Syntrophus aciditrophicus (strain SB)</name>
    <dbReference type="NCBI Taxonomy" id="56780"/>
    <lineage>
        <taxon>Bacteria</taxon>
        <taxon>Pseudomonadati</taxon>
        <taxon>Thermodesulfobacteriota</taxon>
        <taxon>Syntrophia</taxon>
        <taxon>Syntrophales</taxon>
        <taxon>Syntrophaceae</taxon>
        <taxon>Syntrophus</taxon>
    </lineage>
</organism>
<keyword id="KW-0975">Bacterial flagellum</keyword>
<keyword id="KW-0574">Periplasm</keyword>
<keyword id="KW-1185">Reference proteome</keyword>
<keyword id="KW-0732">Signal</keyword>
<gene>
    <name evidence="1" type="primary">flgI</name>
    <name type="ordered locus">SYNAS_13540</name>
    <name type="ORF">SYN_02816</name>
</gene>
<accession>Q2LT20</accession>
<comment type="function">
    <text evidence="1">Assembles around the rod to form the L-ring and probably protects the motor/basal body from shearing forces during rotation.</text>
</comment>
<comment type="subunit">
    <text evidence="1">The basal body constitutes a major portion of the flagellar organelle and consists of four rings (L,P,S, and M) mounted on a central rod.</text>
</comment>
<comment type="subcellular location">
    <subcellularLocation>
        <location evidence="1">Periplasm</location>
    </subcellularLocation>
    <subcellularLocation>
        <location evidence="1">Bacterial flagellum basal body</location>
    </subcellularLocation>
</comment>
<comment type="similarity">
    <text evidence="1">Belongs to the FlgI family.</text>
</comment>
<comment type="sequence caution" evidence="2">
    <conflict type="erroneous initiation">
        <sequence resource="EMBL-CDS" id="ABC77233"/>
    </conflict>
</comment>
<sequence length="390" mass="41165">MLLKKIFLTGIIVLDLVFFVSYGFAARLKDIASISGVRENQLIGYGLVVGLAGTGDDVKNGFTSESLSNLLNRQGISMKNKTLKADNIAAVMVTSSLPAFAKIGARIDATVSSIGDAKSLHGGTLLMTPLRGVDGEIYAVAQGPVTLGGYAVGGANSSTGKNHASAGRVSSGVLVERELKYDFDRLRSFTLNLLQPDFTTSACLADVMNKTLGQHVEAKQVDSFSVDVRMKEATGGNLMNIISMMENLDVPVDSKSVVVMNEKTGTVVMGENVRISTVAVAHGNLSIQIKEDIRVSQPLPFSPLSSKGNQPAMDKKTGTIVAPGGQTVVTLDTTVGIEEEKKQVMVISKGVTIQEVVKALNALGVSPRDLITIMQTIKAAGALQAELKII</sequence>
<dbReference type="EMBL" id="CP000252">
    <property type="protein sequence ID" value="ABC77233.1"/>
    <property type="status" value="ALT_INIT"/>
    <property type="molecule type" value="Genomic_DNA"/>
</dbReference>
<dbReference type="SMR" id="Q2LT20"/>
<dbReference type="FunCoup" id="Q2LT20">
    <property type="interactions" value="53"/>
</dbReference>
<dbReference type="STRING" id="56780.SYN_02816"/>
<dbReference type="KEGG" id="sat:SYN_02816"/>
<dbReference type="eggNOG" id="COG1706">
    <property type="taxonomic scope" value="Bacteria"/>
</dbReference>
<dbReference type="HOGENOM" id="CLU_045235_1_0_7"/>
<dbReference type="InParanoid" id="Q2LT20"/>
<dbReference type="OrthoDB" id="9786431at2"/>
<dbReference type="Proteomes" id="UP000001933">
    <property type="component" value="Chromosome"/>
</dbReference>
<dbReference type="GO" id="GO:0009428">
    <property type="term" value="C:bacterial-type flagellum basal body, distal rod, P ring"/>
    <property type="evidence" value="ECO:0007669"/>
    <property type="project" value="InterPro"/>
</dbReference>
<dbReference type="GO" id="GO:0030288">
    <property type="term" value="C:outer membrane-bounded periplasmic space"/>
    <property type="evidence" value="ECO:0007669"/>
    <property type="project" value="InterPro"/>
</dbReference>
<dbReference type="GO" id="GO:0005198">
    <property type="term" value="F:structural molecule activity"/>
    <property type="evidence" value="ECO:0007669"/>
    <property type="project" value="InterPro"/>
</dbReference>
<dbReference type="GO" id="GO:0071973">
    <property type="term" value="P:bacterial-type flagellum-dependent cell motility"/>
    <property type="evidence" value="ECO:0007669"/>
    <property type="project" value="InterPro"/>
</dbReference>
<dbReference type="HAMAP" id="MF_00416">
    <property type="entry name" value="FlgI"/>
    <property type="match status" value="1"/>
</dbReference>
<dbReference type="InterPro" id="IPR001782">
    <property type="entry name" value="Flag_FlgI"/>
</dbReference>
<dbReference type="NCBIfam" id="NF003676">
    <property type="entry name" value="PRK05303.1"/>
    <property type="match status" value="1"/>
</dbReference>
<dbReference type="PANTHER" id="PTHR30381">
    <property type="entry name" value="FLAGELLAR P-RING PERIPLASMIC PROTEIN FLGI"/>
    <property type="match status" value="1"/>
</dbReference>
<dbReference type="PANTHER" id="PTHR30381:SF0">
    <property type="entry name" value="FLAGELLAR P-RING PROTEIN"/>
    <property type="match status" value="1"/>
</dbReference>
<dbReference type="Pfam" id="PF02119">
    <property type="entry name" value="FlgI"/>
    <property type="match status" value="1"/>
</dbReference>
<dbReference type="PRINTS" id="PR01010">
    <property type="entry name" value="FLGPRINGFLGI"/>
</dbReference>
<proteinExistence type="inferred from homology"/>
<name>FLGI_SYNAS</name>
<protein>
    <recommendedName>
        <fullName evidence="1">Flagellar P-ring protein</fullName>
    </recommendedName>
    <alternativeName>
        <fullName evidence="1">Basal body P-ring protein</fullName>
    </alternativeName>
</protein>
<evidence type="ECO:0000255" key="1">
    <source>
        <dbReference type="HAMAP-Rule" id="MF_00416"/>
    </source>
</evidence>
<evidence type="ECO:0000305" key="2"/>
<feature type="signal peptide" evidence="1">
    <location>
        <begin position="1"/>
        <end position="25"/>
    </location>
</feature>
<feature type="chain" id="PRO_0000236322" description="Flagellar P-ring protein">
    <location>
        <begin position="26"/>
        <end position="390"/>
    </location>
</feature>
<reference key="1">
    <citation type="journal article" date="2007" name="Proc. Natl. Acad. Sci. U.S.A.">
        <title>The genome of Syntrophus aciditrophicus: life at the thermodynamic limit of microbial growth.</title>
        <authorList>
            <person name="McInerney M.J."/>
            <person name="Rohlin L."/>
            <person name="Mouttaki H."/>
            <person name="Kim U."/>
            <person name="Krupp R.S."/>
            <person name="Rios-Hernandez L."/>
            <person name="Sieber J."/>
            <person name="Struchtemeyer C.G."/>
            <person name="Bhattacharyya A."/>
            <person name="Campbell J.W."/>
            <person name="Gunsalus R.P."/>
        </authorList>
    </citation>
    <scope>NUCLEOTIDE SEQUENCE [LARGE SCALE GENOMIC DNA]</scope>
    <source>
        <strain>SB</strain>
    </source>
</reference>